<evidence type="ECO:0000255" key="1">
    <source>
        <dbReference type="HAMAP-Rule" id="MF_01725"/>
    </source>
</evidence>
<organism>
    <name type="scientific">Pseudomonas syringae pv. syringae (strain B728a)</name>
    <dbReference type="NCBI Taxonomy" id="205918"/>
    <lineage>
        <taxon>Bacteria</taxon>
        <taxon>Pseudomonadati</taxon>
        <taxon>Pseudomonadota</taxon>
        <taxon>Gammaproteobacteria</taxon>
        <taxon>Pseudomonadales</taxon>
        <taxon>Pseudomonadaceae</taxon>
        <taxon>Pseudomonas</taxon>
        <taxon>Pseudomonas syringae</taxon>
    </lineage>
</organism>
<keyword id="KW-0067">ATP-binding</keyword>
<keyword id="KW-0997">Cell inner membrane</keyword>
<keyword id="KW-1003">Cell membrane</keyword>
<keyword id="KW-0406">Ion transport</keyword>
<keyword id="KW-0472">Membrane</keyword>
<keyword id="KW-0547">Nucleotide-binding</keyword>
<keyword id="KW-1278">Translocase</keyword>
<keyword id="KW-0813">Transport</keyword>
<keyword id="KW-0862">Zinc</keyword>
<keyword id="KW-0864">Zinc transport</keyword>
<protein>
    <recommendedName>
        <fullName evidence="1">Zinc import ATP-binding protein ZnuC</fullName>
        <ecNumber evidence="1">7.2.2.20</ecNumber>
    </recommendedName>
</protein>
<comment type="function">
    <text evidence="1">Part of the ABC transporter complex ZnuABC involved in zinc import. Responsible for energy coupling to the transport system.</text>
</comment>
<comment type="catalytic activity">
    <reaction evidence="1">
        <text>Zn(2+)(out) + ATP(in) + H2O(in) = Zn(2+)(in) + ADP(in) + phosphate(in) + H(+)(in)</text>
        <dbReference type="Rhea" id="RHEA:29795"/>
        <dbReference type="ChEBI" id="CHEBI:15377"/>
        <dbReference type="ChEBI" id="CHEBI:15378"/>
        <dbReference type="ChEBI" id="CHEBI:29105"/>
        <dbReference type="ChEBI" id="CHEBI:30616"/>
        <dbReference type="ChEBI" id="CHEBI:43474"/>
        <dbReference type="ChEBI" id="CHEBI:456216"/>
        <dbReference type="EC" id="7.2.2.20"/>
    </reaction>
</comment>
<comment type="subunit">
    <text evidence="1">The complex is composed of two ATP-binding proteins (ZnuC), two transmembrane proteins (ZnuB) and a solute-binding protein (ZnuA).</text>
</comment>
<comment type="subcellular location">
    <subcellularLocation>
        <location evidence="1">Cell inner membrane</location>
        <topology evidence="1">Peripheral membrane protein</topology>
    </subcellularLocation>
</comment>
<comment type="similarity">
    <text evidence="1">Belongs to the ABC transporter superfamily. Zinc importer (TC 3.A.1.15.5) family.</text>
</comment>
<reference key="1">
    <citation type="journal article" date="2005" name="Proc. Natl. Acad. Sci. U.S.A.">
        <title>Comparison of the complete genome sequences of Pseudomonas syringae pv. syringae B728a and pv. tomato DC3000.</title>
        <authorList>
            <person name="Feil H."/>
            <person name="Feil W.S."/>
            <person name="Chain P."/>
            <person name="Larimer F."/>
            <person name="Dibartolo G."/>
            <person name="Copeland A."/>
            <person name="Lykidis A."/>
            <person name="Trong S."/>
            <person name="Nolan M."/>
            <person name="Goltsman E."/>
            <person name="Thiel J."/>
            <person name="Malfatti S."/>
            <person name="Loper J.E."/>
            <person name="Lapidus A."/>
            <person name="Detter J.C."/>
            <person name="Land M."/>
            <person name="Richardson P.M."/>
            <person name="Kyrpides N.C."/>
            <person name="Ivanova N."/>
            <person name="Lindow S.E."/>
        </authorList>
    </citation>
    <scope>NUCLEOTIDE SEQUENCE [LARGE SCALE GENOMIC DNA]</scope>
    <source>
        <strain>B728a</strain>
    </source>
</reference>
<accession>Q4ZZS2</accession>
<feature type="chain" id="PRO_0000281531" description="Zinc import ATP-binding protein ZnuC">
    <location>
        <begin position="1"/>
        <end position="262"/>
    </location>
</feature>
<feature type="domain" description="ABC transporter" evidence="1">
    <location>
        <begin position="6"/>
        <end position="221"/>
    </location>
</feature>
<feature type="binding site" evidence="1">
    <location>
        <begin position="38"/>
        <end position="45"/>
    </location>
    <ligand>
        <name>ATP</name>
        <dbReference type="ChEBI" id="CHEBI:30616"/>
    </ligand>
</feature>
<gene>
    <name evidence="1" type="primary">znuC</name>
    <name type="ordered locus">Psyr_0277</name>
</gene>
<name>ZNUC_PSEU2</name>
<sequence length="262" mass="28352">MSDALIRLDKVAVTLSGQNVLDDIQLSVKPGEIVTLIGPNGAGKTTLVRAVLGLLKPDSGTVWRKPKLRVGYMPQKLHVDQTLPLSVLRFLRLVPGVDRTAAASALEEVGAGKVIDSPIQGISGGEMQRVLLARALLRKPELLVLDEPVQGVDVAGQAELYSLITRLRDRHRCGVLMVSHDLHLVMSTTDQVVCLNRHVCCSGHPEQVSHDPAFVELFGKNAQSLAIYHHHHDHAHDLHGAVVNDAAPLSHTHVHGDSCKHG</sequence>
<proteinExistence type="inferred from homology"/>
<dbReference type="EC" id="7.2.2.20" evidence="1"/>
<dbReference type="EMBL" id="CP000075">
    <property type="protein sequence ID" value="AAY35350.1"/>
    <property type="molecule type" value="Genomic_DNA"/>
</dbReference>
<dbReference type="RefSeq" id="WP_011266293.1">
    <property type="nucleotide sequence ID" value="NC_007005.1"/>
</dbReference>
<dbReference type="RefSeq" id="YP_233388.1">
    <property type="nucleotide sequence ID" value="NC_007005.1"/>
</dbReference>
<dbReference type="SMR" id="Q4ZZS2"/>
<dbReference type="STRING" id="205918.Psyr_0277"/>
<dbReference type="KEGG" id="psb:Psyr_0277"/>
<dbReference type="PATRIC" id="fig|205918.7.peg.278"/>
<dbReference type="eggNOG" id="COG1121">
    <property type="taxonomic scope" value="Bacteria"/>
</dbReference>
<dbReference type="HOGENOM" id="CLU_000604_1_11_6"/>
<dbReference type="OrthoDB" id="9780942at2"/>
<dbReference type="Proteomes" id="UP000000426">
    <property type="component" value="Chromosome"/>
</dbReference>
<dbReference type="GO" id="GO:0005886">
    <property type="term" value="C:plasma membrane"/>
    <property type="evidence" value="ECO:0007669"/>
    <property type="project" value="UniProtKB-SubCell"/>
</dbReference>
<dbReference type="GO" id="GO:0015633">
    <property type="term" value="F:ABC-type zinc transporter activity"/>
    <property type="evidence" value="ECO:0007669"/>
    <property type="project" value="UniProtKB-EC"/>
</dbReference>
<dbReference type="GO" id="GO:0005524">
    <property type="term" value="F:ATP binding"/>
    <property type="evidence" value="ECO:0007669"/>
    <property type="project" value="UniProtKB-KW"/>
</dbReference>
<dbReference type="GO" id="GO:0016887">
    <property type="term" value="F:ATP hydrolysis activity"/>
    <property type="evidence" value="ECO:0007669"/>
    <property type="project" value="InterPro"/>
</dbReference>
<dbReference type="GO" id="GO:0010043">
    <property type="term" value="P:response to zinc ion"/>
    <property type="evidence" value="ECO:0007669"/>
    <property type="project" value="TreeGrafter"/>
</dbReference>
<dbReference type="CDD" id="cd03235">
    <property type="entry name" value="ABC_Metallic_Cations"/>
    <property type="match status" value="1"/>
</dbReference>
<dbReference type="FunFam" id="3.40.50.300:FF:000392">
    <property type="entry name" value="Zinc import ATP-binding protein ZnuC"/>
    <property type="match status" value="1"/>
</dbReference>
<dbReference type="Gene3D" id="3.40.50.300">
    <property type="entry name" value="P-loop containing nucleotide triphosphate hydrolases"/>
    <property type="match status" value="1"/>
</dbReference>
<dbReference type="InterPro" id="IPR003593">
    <property type="entry name" value="AAA+_ATPase"/>
</dbReference>
<dbReference type="InterPro" id="IPR003439">
    <property type="entry name" value="ABC_transporter-like_ATP-bd"/>
</dbReference>
<dbReference type="InterPro" id="IPR017871">
    <property type="entry name" value="ABC_transporter-like_CS"/>
</dbReference>
<dbReference type="InterPro" id="IPR050153">
    <property type="entry name" value="Metal_Ion_Import_ABC"/>
</dbReference>
<dbReference type="InterPro" id="IPR027417">
    <property type="entry name" value="P-loop_NTPase"/>
</dbReference>
<dbReference type="NCBIfam" id="NF007090">
    <property type="entry name" value="PRK09544.1"/>
    <property type="match status" value="1"/>
</dbReference>
<dbReference type="PANTHER" id="PTHR42734">
    <property type="entry name" value="METAL TRANSPORT SYSTEM ATP-BINDING PROTEIN TM_0124-RELATED"/>
    <property type="match status" value="1"/>
</dbReference>
<dbReference type="PANTHER" id="PTHR42734:SF9">
    <property type="entry name" value="ZINC IMPORT ATP-BINDING PROTEIN ZNUC"/>
    <property type="match status" value="1"/>
</dbReference>
<dbReference type="Pfam" id="PF00005">
    <property type="entry name" value="ABC_tran"/>
    <property type="match status" value="1"/>
</dbReference>
<dbReference type="SMART" id="SM00382">
    <property type="entry name" value="AAA"/>
    <property type="match status" value="1"/>
</dbReference>
<dbReference type="SUPFAM" id="SSF52540">
    <property type="entry name" value="P-loop containing nucleoside triphosphate hydrolases"/>
    <property type="match status" value="1"/>
</dbReference>
<dbReference type="PROSITE" id="PS00211">
    <property type="entry name" value="ABC_TRANSPORTER_1"/>
    <property type="match status" value="1"/>
</dbReference>
<dbReference type="PROSITE" id="PS50893">
    <property type="entry name" value="ABC_TRANSPORTER_2"/>
    <property type="match status" value="1"/>
</dbReference>
<dbReference type="PROSITE" id="PS51298">
    <property type="entry name" value="ZNUC"/>
    <property type="match status" value="1"/>
</dbReference>